<reference key="1">
    <citation type="journal article" date="1997" name="J. Bacteriol.">
        <title>Complete genome sequence of Methanobacterium thermoautotrophicum deltaH: functional analysis and comparative genomics.</title>
        <authorList>
            <person name="Smith D.R."/>
            <person name="Doucette-Stamm L.A."/>
            <person name="Deloughery C."/>
            <person name="Lee H.-M."/>
            <person name="Dubois J."/>
            <person name="Aldredge T."/>
            <person name="Bashirzadeh R."/>
            <person name="Blakely D."/>
            <person name="Cook R."/>
            <person name="Gilbert K."/>
            <person name="Harrison D."/>
            <person name="Hoang L."/>
            <person name="Keagle P."/>
            <person name="Lumm W."/>
            <person name="Pothier B."/>
            <person name="Qiu D."/>
            <person name="Spadafora R."/>
            <person name="Vicare R."/>
            <person name="Wang Y."/>
            <person name="Wierzbowski J."/>
            <person name="Gibson R."/>
            <person name="Jiwani N."/>
            <person name="Caruso A."/>
            <person name="Bush D."/>
            <person name="Safer H."/>
            <person name="Patwell D."/>
            <person name="Prabhakar S."/>
            <person name="McDougall S."/>
            <person name="Shimer G."/>
            <person name="Goyal A."/>
            <person name="Pietrovski S."/>
            <person name="Church G.M."/>
            <person name="Daniels C.J."/>
            <person name="Mao J.-I."/>
            <person name="Rice P."/>
            <person name="Noelling J."/>
            <person name="Reeve J.N."/>
        </authorList>
    </citation>
    <scope>NUCLEOTIDE SEQUENCE [LARGE SCALE GENOMIC DNA]</scope>
    <source>
        <strain>ATCC 29096 / DSM 1053 / JCM 10044 / NBRC 100330 / Delta H</strain>
    </source>
</reference>
<comment type="function">
    <text evidence="1">Involved in DNA repair and in homologous recombination. May regulate the cleavage reactions of the branch-structured DNA. Has a very weak ATPase activity that is not stimulated by DNA. Binds DNA but does not promote DNA strands exchange (By similarity).</text>
</comment>
<comment type="similarity">
    <text evidence="3">Belongs to the eukaryotic RecA-like protein family. RadB subfamily.</text>
</comment>
<keyword id="KW-0067">ATP-binding</keyword>
<keyword id="KW-0227">DNA damage</keyword>
<keyword id="KW-0233">DNA recombination</keyword>
<keyword id="KW-0238">DNA-binding</keyword>
<keyword id="KW-0547">Nucleotide-binding</keyword>
<keyword id="KW-1185">Reference proteome</keyword>
<dbReference type="EMBL" id="AE000666">
    <property type="protein sequence ID" value="AAB86165.1"/>
    <property type="molecule type" value="Genomic_DNA"/>
</dbReference>
<dbReference type="PIR" id="D69093">
    <property type="entry name" value="D69093"/>
</dbReference>
<dbReference type="RefSeq" id="WP_010877300.1">
    <property type="nucleotide sequence ID" value="NC_000916.1"/>
</dbReference>
<dbReference type="SMR" id="O27728"/>
<dbReference type="STRING" id="187420.MTH_1693"/>
<dbReference type="PaxDb" id="187420-MTH_1693"/>
<dbReference type="EnsemblBacteria" id="AAB86165">
    <property type="protein sequence ID" value="AAB86165"/>
    <property type="gene ID" value="MTH_1693"/>
</dbReference>
<dbReference type="GeneID" id="77402210"/>
<dbReference type="KEGG" id="mth:MTH_1693"/>
<dbReference type="PATRIC" id="fig|187420.15.peg.1653"/>
<dbReference type="HOGENOM" id="CLU_041732_2_0_2"/>
<dbReference type="InParanoid" id="O27728"/>
<dbReference type="Proteomes" id="UP000005223">
    <property type="component" value="Chromosome"/>
</dbReference>
<dbReference type="GO" id="GO:0005524">
    <property type="term" value="F:ATP binding"/>
    <property type="evidence" value="ECO:0007669"/>
    <property type="project" value="UniProtKB-UniRule"/>
</dbReference>
<dbReference type="GO" id="GO:0016887">
    <property type="term" value="F:ATP hydrolysis activity"/>
    <property type="evidence" value="ECO:0007669"/>
    <property type="project" value="InterPro"/>
</dbReference>
<dbReference type="GO" id="GO:0140664">
    <property type="term" value="F:ATP-dependent DNA damage sensor activity"/>
    <property type="evidence" value="ECO:0007669"/>
    <property type="project" value="InterPro"/>
</dbReference>
<dbReference type="GO" id="GO:0003684">
    <property type="term" value="F:damaged DNA binding"/>
    <property type="evidence" value="ECO:0007669"/>
    <property type="project" value="UniProtKB-UniRule"/>
</dbReference>
<dbReference type="GO" id="GO:0006310">
    <property type="term" value="P:DNA recombination"/>
    <property type="evidence" value="ECO:0007669"/>
    <property type="project" value="UniProtKB-UniRule"/>
</dbReference>
<dbReference type="GO" id="GO:0006281">
    <property type="term" value="P:DNA repair"/>
    <property type="evidence" value="ECO:0007669"/>
    <property type="project" value="UniProtKB-UniRule"/>
</dbReference>
<dbReference type="CDD" id="cd01394">
    <property type="entry name" value="archRadB"/>
    <property type="match status" value="1"/>
</dbReference>
<dbReference type="Gene3D" id="3.40.50.300">
    <property type="entry name" value="P-loop containing nucleotide triphosphate hydrolases"/>
    <property type="match status" value="1"/>
</dbReference>
<dbReference type="HAMAP" id="MF_00350">
    <property type="entry name" value="RadB"/>
    <property type="match status" value="1"/>
</dbReference>
<dbReference type="InterPro" id="IPR003593">
    <property type="entry name" value="AAA+_ATPase"/>
</dbReference>
<dbReference type="InterPro" id="IPR013632">
    <property type="entry name" value="DNA_recomb/repair_Rad51_C"/>
</dbReference>
<dbReference type="InterPro" id="IPR011939">
    <property type="entry name" value="DNA_repair_and_recomb_RadB"/>
</dbReference>
<dbReference type="InterPro" id="IPR027417">
    <property type="entry name" value="P-loop_NTPase"/>
</dbReference>
<dbReference type="InterPro" id="IPR020588">
    <property type="entry name" value="RecA_ATP-bd"/>
</dbReference>
<dbReference type="NCBIfam" id="TIGR02237">
    <property type="entry name" value="recomb_radB"/>
    <property type="match status" value="1"/>
</dbReference>
<dbReference type="PANTHER" id="PTHR22942:SF47">
    <property type="entry name" value="DNA REPAIR AND RECOMBINATION PROTEIN RADB"/>
    <property type="match status" value="1"/>
</dbReference>
<dbReference type="PANTHER" id="PTHR22942">
    <property type="entry name" value="RECA/RAD51/RADA DNA STRAND-PAIRING FAMILY MEMBER"/>
    <property type="match status" value="1"/>
</dbReference>
<dbReference type="Pfam" id="PF08423">
    <property type="entry name" value="Rad51"/>
    <property type="match status" value="1"/>
</dbReference>
<dbReference type="PIRSF" id="PIRSF003336">
    <property type="entry name" value="RadB"/>
    <property type="match status" value="1"/>
</dbReference>
<dbReference type="SMART" id="SM00382">
    <property type="entry name" value="AAA"/>
    <property type="match status" value="1"/>
</dbReference>
<dbReference type="SUPFAM" id="SSF52540">
    <property type="entry name" value="P-loop containing nucleoside triphosphate hydrolases"/>
    <property type="match status" value="1"/>
</dbReference>
<dbReference type="PROSITE" id="PS50162">
    <property type="entry name" value="RECA_2"/>
    <property type="match status" value="1"/>
</dbReference>
<protein>
    <recommendedName>
        <fullName>DNA repair and recombination protein RadB</fullName>
    </recommendedName>
</protein>
<sequence length="234" mass="26193">MKKLRDMGENRRIPTESSIDRILGGGVERRTITQFYGPPGSGKTNITIKLAVETARRGKNTVFIDTEGGLSVERIRQVSGDIFDRVADSIIVFEPSSFTEQGEALQRTFSFLKTHGDSTDLVVLDSAVALYRLKEGNASSFNLDLGRQMFLLLQMARRFDLAAVITNQIYSITGDDGREYVSPVGGTLLRYWSKVMVELEMGERPGERFAVLRRHRNRLEGSRVGFRIVADGIL</sequence>
<evidence type="ECO:0000250" key="1"/>
<evidence type="ECO:0000255" key="2"/>
<evidence type="ECO:0000305" key="3"/>
<organism>
    <name type="scientific">Methanothermobacter thermautotrophicus (strain ATCC 29096 / DSM 1053 / JCM 10044 / NBRC 100330 / Delta H)</name>
    <name type="common">Methanobacterium thermoautotrophicum</name>
    <dbReference type="NCBI Taxonomy" id="187420"/>
    <lineage>
        <taxon>Archaea</taxon>
        <taxon>Methanobacteriati</taxon>
        <taxon>Methanobacteriota</taxon>
        <taxon>Methanomada group</taxon>
        <taxon>Methanobacteria</taxon>
        <taxon>Methanobacteriales</taxon>
        <taxon>Methanobacteriaceae</taxon>
        <taxon>Methanothermobacter</taxon>
    </lineage>
</organism>
<gene>
    <name type="primary">radB</name>
    <name type="ordered locus">MTH_1693</name>
</gene>
<proteinExistence type="inferred from homology"/>
<name>RADB_METTH</name>
<feature type="chain" id="PRO_0000150115" description="DNA repair and recombination protein RadB">
    <location>
        <begin position="1"/>
        <end position="234"/>
    </location>
</feature>
<feature type="binding site" evidence="2">
    <location>
        <begin position="37"/>
        <end position="44"/>
    </location>
    <ligand>
        <name>ATP</name>
        <dbReference type="ChEBI" id="CHEBI:30616"/>
    </ligand>
</feature>
<accession>O27728</accession>